<accession>P9WJP5</accession>
<accession>L0TDJ7</accession>
<accession>O05807</accession>
<accession>P65419</accession>
<proteinExistence type="evidence at protein level"/>
<reference key="1">
    <citation type="journal article" date="1998" name="Nature">
        <title>Deciphering the biology of Mycobacterium tuberculosis from the complete genome sequence.</title>
        <authorList>
            <person name="Cole S.T."/>
            <person name="Brosch R."/>
            <person name="Parkhill J."/>
            <person name="Garnier T."/>
            <person name="Churcher C.M."/>
            <person name="Harris D.E."/>
            <person name="Gordon S.V."/>
            <person name="Eiglmeier K."/>
            <person name="Gas S."/>
            <person name="Barry C.E. III"/>
            <person name="Tekaia F."/>
            <person name="Badcock K."/>
            <person name="Basham D."/>
            <person name="Brown D."/>
            <person name="Chillingworth T."/>
            <person name="Connor R."/>
            <person name="Davies R.M."/>
            <person name="Devlin K."/>
            <person name="Feltwell T."/>
            <person name="Gentles S."/>
            <person name="Hamlin N."/>
            <person name="Holroyd S."/>
            <person name="Hornsby T."/>
            <person name="Jagels K."/>
            <person name="Krogh A."/>
            <person name="McLean J."/>
            <person name="Moule S."/>
            <person name="Murphy L.D."/>
            <person name="Oliver S."/>
            <person name="Osborne J."/>
            <person name="Quail M.A."/>
            <person name="Rajandream M.A."/>
            <person name="Rogers J."/>
            <person name="Rutter S."/>
            <person name="Seeger K."/>
            <person name="Skelton S."/>
            <person name="Squares S."/>
            <person name="Squares R."/>
            <person name="Sulston J.E."/>
            <person name="Taylor K."/>
            <person name="Whitehead S."/>
            <person name="Barrell B.G."/>
        </authorList>
    </citation>
    <scope>NUCLEOTIDE SEQUENCE [LARGE SCALE GENOMIC DNA]</scope>
    <source>
        <strain>ATCC 25618 / H37Rv</strain>
    </source>
</reference>
<reference key="2">
    <citation type="journal article" date="2011" name="Mol. Cell. Proteomics">
        <title>Proteogenomic analysis of Mycobacterium tuberculosis by high resolution mass spectrometry.</title>
        <authorList>
            <person name="Kelkar D.S."/>
            <person name="Kumar D."/>
            <person name="Kumar P."/>
            <person name="Balakrishnan L."/>
            <person name="Muthusamy B."/>
            <person name="Yadav A.K."/>
            <person name="Shrivastava P."/>
            <person name="Marimuthu A."/>
            <person name="Anand S."/>
            <person name="Sundaram H."/>
            <person name="Kingsbury R."/>
            <person name="Harsha H.C."/>
            <person name="Nair B."/>
            <person name="Prasad T.S."/>
            <person name="Chauhan D.S."/>
            <person name="Katoch K."/>
            <person name="Katoch V.M."/>
            <person name="Kumar P."/>
            <person name="Chaerkady R."/>
            <person name="Ramachandran S."/>
            <person name="Dash D."/>
            <person name="Pandey A."/>
        </authorList>
    </citation>
    <scope>IDENTIFICATION BY MASS SPECTROMETRY [LARGE SCALE ANALYSIS]</scope>
    <source>
        <strain>ATCC 25618 / H37Rv</strain>
    </source>
</reference>
<sequence length="493" mass="53595">MSDLARTDVVLIGAGIMSATLGVLLRRLEPNWSITLIERLDAVAAESSGPWNNAGTGHSALCEMNYTPEMPDGSIDITKAVRVNEQFQVTRQFWAYAAENGILTDVRSFLNPVPHVSFVHGSRGVEYLRRRQKALAGNPLFAGTEFIESPDEFARRLPFMAAKRAFSEPVALNWAADGTDVDFGALAKQLIGYCVQNGTTALFGHEVRNLSRQSDGSWTVTMCNRRTGEKRKLNTKFVFVGAGGDTLPVLQKSGIKEVKGFAGFPIGGRFLRAGNPALTASHRAKVYGFPAPGAPPLGALHLDLRFVNGKSWLVFGPYAGWSPKFLKHGQISDLPRSIRPDNLLSVLGVGLTERRLLNYLISQLRLSEPERVSALREFAPSAIDSDWELTIAGQRVQVIRRDERNGGVLEFGTTVIGDADGSIAGLLGGSPGASTAVAIMLDVLQKCFANRYQSWLPTLKEMVPSLGVQLSNEPALFDEVWSWSTKALKLGAA</sequence>
<keyword id="KW-0274">FAD</keyword>
<keyword id="KW-0285">Flavoprotein</keyword>
<keyword id="KW-0560">Oxidoreductase</keyword>
<keyword id="KW-1185">Reference proteome</keyword>
<keyword id="KW-0816">Tricarboxylic acid cycle</keyword>
<feature type="chain" id="PRO_0000128721" description="Probable malate:quinone oxidoreductase">
    <location>
        <begin position="1"/>
        <end position="493"/>
    </location>
</feature>
<dbReference type="EC" id="1.1.5.4"/>
<dbReference type="EMBL" id="AL123456">
    <property type="protein sequence ID" value="CCP45653.1"/>
    <property type="molecule type" value="Genomic_DNA"/>
</dbReference>
<dbReference type="PIR" id="G70589">
    <property type="entry name" value="G70589"/>
</dbReference>
<dbReference type="RefSeq" id="NP_217368.1">
    <property type="nucleotide sequence ID" value="NC_000962.3"/>
</dbReference>
<dbReference type="RefSeq" id="WP_003414545.1">
    <property type="nucleotide sequence ID" value="NZ_NVQJ01000006.1"/>
</dbReference>
<dbReference type="SMR" id="P9WJP5"/>
<dbReference type="FunCoup" id="P9WJP5">
    <property type="interactions" value="110"/>
</dbReference>
<dbReference type="STRING" id="83332.Rv2852c"/>
<dbReference type="PaxDb" id="83332-Rv2852c"/>
<dbReference type="DNASU" id="888544"/>
<dbReference type="GeneID" id="45426839"/>
<dbReference type="GeneID" id="888544"/>
<dbReference type="KEGG" id="mtu:Rv2852c"/>
<dbReference type="KEGG" id="mtv:RVBD_2852c"/>
<dbReference type="TubercuList" id="Rv2852c"/>
<dbReference type="eggNOG" id="COG0579">
    <property type="taxonomic scope" value="Bacteria"/>
</dbReference>
<dbReference type="InParanoid" id="P9WJP5"/>
<dbReference type="OrthoDB" id="9763983at2"/>
<dbReference type="PhylomeDB" id="P9WJP5"/>
<dbReference type="UniPathway" id="UPA00223">
    <property type="reaction ID" value="UER01008"/>
</dbReference>
<dbReference type="Proteomes" id="UP000001584">
    <property type="component" value="Chromosome"/>
</dbReference>
<dbReference type="GO" id="GO:0005737">
    <property type="term" value="C:cytoplasm"/>
    <property type="evidence" value="ECO:0000318"/>
    <property type="project" value="GO_Central"/>
</dbReference>
<dbReference type="GO" id="GO:0005886">
    <property type="term" value="C:plasma membrane"/>
    <property type="evidence" value="ECO:0007005"/>
    <property type="project" value="MTBBASE"/>
</dbReference>
<dbReference type="GO" id="GO:0008924">
    <property type="term" value="F:L-malate dehydrogenase (quinone) activity"/>
    <property type="evidence" value="ECO:0007669"/>
    <property type="project" value="UniProtKB-UniRule"/>
</dbReference>
<dbReference type="GO" id="GO:0006099">
    <property type="term" value="P:tricarboxylic acid cycle"/>
    <property type="evidence" value="ECO:0007669"/>
    <property type="project" value="UniProtKB-UniRule"/>
</dbReference>
<dbReference type="Gene3D" id="3.30.9.10">
    <property type="entry name" value="D-Amino Acid Oxidase, subunit A, domain 2"/>
    <property type="match status" value="1"/>
</dbReference>
<dbReference type="Gene3D" id="3.50.50.60">
    <property type="entry name" value="FAD/NAD(P)-binding domain"/>
    <property type="match status" value="1"/>
</dbReference>
<dbReference type="HAMAP" id="MF_00212">
    <property type="entry name" value="MQO"/>
    <property type="match status" value="1"/>
</dbReference>
<dbReference type="InterPro" id="IPR036188">
    <property type="entry name" value="FAD/NAD-bd_sf"/>
</dbReference>
<dbReference type="InterPro" id="IPR006231">
    <property type="entry name" value="MQO"/>
</dbReference>
<dbReference type="NCBIfam" id="TIGR01320">
    <property type="entry name" value="mal_quin_oxido"/>
    <property type="match status" value="1"/>
</dbReference>
<dbReference type="NCBIfam" id="NF003606">
    <property type="entry name" value="PRK05257.2-1"/>
    <property type="match status" value="1"/>
</dbReference>
<dbReference type="NCBIfam" id="NF003611">
    <property type="entry name" value="PRK05257.3-2"/>
    <property type="match status" value="1"/>
</dbReference>
<dbReference type="PANTHER" id="PTHR43104">
    <property type="entry name" value="L-2-HYDROXYGLUTARATE DEHYDROGENASE, MITOCHONDRIAL"/>
    <property type="match status" value="1"/>
</dbReference>
<dbReference type="PANTHER" id="PTHR43104:SF2">
    <property type="entry name" value="L-2-HYDROXYGLUTARATE DEHYDROGENASE, MITOCHONDRIAL"/>
    <property type="match status" value="1"/>
</dbReference>
<dbReference type="Pfam" id="PF06039">
    <property type="entry name" value="Mqo"/>
    <property type="match status" value="1"/>
</dbReference>
<dbReference type="SUPFAM" id="SSF51905">
    <property type="entry name" value="FAD/NAD(P)-binding domain"/>
    <property type="match status" value="1"/>
</dbReference>
<name>MQO_MYCTU</name>
<comment type="catalytic activity">
    <reaction>
        <text>(S)-malate + a quinone = a quinol + oxaloacetate</text>
        <dbReference type="Rhea" id="RHEA:46012"/>
        <dbReference type="ChEBI" id="CHEBI:15589"/>
        <dbReference type="ChEBI" id="CHEBI:16452"/>
        <dbReference type="ChEBI" id="CHEBI:24646"/>
        <dbReference type="ChEBI" id="CHEBI:132124"/>
        <dbReference type="EC" id="1.1.5.4"/>
    </reaction>
</comment>
<comment type="cofactor">
    <cofactor evidence="1">
        <name>FAD</name>
        <dbReference type="ChEBI" id="CHEBI:57692"/>
    </cofactor>
</comment>
<comment type="pathway">
    <text>Carbohydrate metabolism; tricarboxylic acid cycle; oxaloacetate from (S)-malate (quinone route): step 1/1.</text>
</comment>
<comment type="similarity">
    <text evidence="2">Belongs to the MQO family.</text>
</comment>
<gene>
    <name type="primary">mqo</name>
    <name type="ordered locus">Rv2852c</name>
    <name type="ORF">MTCY24A1.05</name>
</gene>
<organism>
    <name type="scientific">Mycobacterium tuberculosis (strain ATCC 25618 / H37Rv)</name>
    <dbReference type="NCBI Taxonomy" id="83332"/>
    <lineage>
        <taxon>Bacteria</taxon>
        <taxon>Bacillati</taxon>
        <taxon>Actinomycetota</taxon>
        <taxon>Actinomycetes</taxon>
        <taxon>Mycobacteriales</taxon>
        <taxon>Mycobacteriaceae</taxon>
        <taxon>Mycobacterium</taxon>
        <taxon>Mycobacterium tuberculosis complex</taxon>
    </lineage>
</organism>
<evidence type="ECO:0000250" key="1"/>
<evidence type="ECO:0000305" key="2"/>
<protein>
    <recommendedName>
        <fullName>Probable malate:quinone oxidoreductase</fullName>
        <ecNumber>1.1.5.4</ecNumber>
    </recommendedName>
    <alternativeName>
        <fullName>MQO</fullName>
    </alternativeName>
    <alternativeName>
        <fullName>Malate dehydrogenase [quinone]</fullName>
    </alternativeName>
</protein>